<proteinExistence type="evidence at protein level"/>
<comment type="function">
    <text evidence="5 7">Plant-specific microtubule-associated protein (MAP) that regulates the orientation of cortical microtubules and the direction of organ growth (PubMed:18577573). Determines microtubule organization by modulating microtubule severing (PubMed:24055158).</text>
</comment>
<comment type="subunit">
    <text evidence="6">Interacts with WAV3.</text>
</comment>
<comment type="subcellular location">
    <subcellularLocation>
        <location evidence="3 4 5">Cytoplasm</location>
        <location evidence="3 4 5">Cytoskeleton</location>
    </subcellularLocation>
    <text>Bound to microtubules.</text>
</comment>
<comment type="tissue specificity">
    <text evidence="3 4 5">Expressed in roots, hypocotyls, stems, flowers, siliques, inflorescences, petioles, cotyledons, and leaves. Particularly present in root tips and shoot meristems.</text>
</comment>
<comment type="disruption phenotype">
    <text evidence="5">Right-handed twisting of petioles. Enhanced twisting when associated with SP2L disruption.</text>
</comment>
<comment type="sequence caution" evidence="10">
    <conflict type="erroneous gene model prediction">
        <sequence resource="EMBL-CDS" id="CAB38836"/>
    </conflict>
</comment>
<comment type="sequence caution" evidence="10">
    <conflict type="erroneous gene model prediction">
        <sequence resource="EMBL-CDS" id="CAB79561"/>
    </conflict>
</comment>
<accession>Q9T041</accession>
<accession>Q68VK4</accession>
<accession>Q84MA0</accession>
<dbReference type="EMBL" id="AB176521">
    <property type="protein sequence ID" value="BAD54701.1"/>
    <property type="molecule type" value="mRNA"/>
</dbReference>
<dbReference type="EMBL" id="AJ249836">
    <property type="protein sequence ID" value="CAC80696.2"/>
    <property type="molecule type" value="mRNA"/>
</dbReference>
<dbReference type="EMBL" id="AL035680">
    <property type="protein sequence ID" value="CAB38836.1"/>
    <property type="status" value="ALT_SEQ"/>
    <property type="molecule type" value="Genomic_DNA"/>
</dbReference>
<dbReference type="EMBL" id="AL161566">
    <property type="protein sequence ID" value="CAB79561.1"/>
    <property type="status" value="ALT_SEQ"/>
    <property type="molecule type" value="Genomic_DNA"/>
</dbReference>
<dbReference type="EMBL" id="CP002687">
    <property type="protein sequence ID" value="AEE85295.1"/>
    <property type="molecule type" value="Genomic_DNA"/>
</dbReference>
<dbReference type="EMBL" id="BT006451">
    <property type="protein sequence ID" value="AAP21259.1"/>
    <property type="molecule type" value="mRNA"/>
</dbReference>
<dbReference type="PIR" id="T06036">
    <property type="entry name" value="T06036"/>
</dbReference>
<dbReference type="RefSeq" id="NP_194436.2">
    <property type="nucleotide sequence ID" value="NM_118840.5"/>
</dbReference>
<dbReference type="PDB" id="8D00">
    <property type="method" value="X-ray"/>
    <property type="resolution" value="2.80 A"/>
    <property type="chains" value="A=33-333"/>
</dbReference>
<dbReference type="PDB" id="8F8N">
    <property type="method" value="X-ray"/>
    <property type="resolution" value="1.80 A"/>
    <property type="chains" value="A=649-864"/>
</dbReference>
<dbReference type="PDBsum" id="8D00"/>
<dbReference type="PDBsum" id="8F8N"/>
<dbReference type="SMR" id="Q9T041"/>
<dbReference type="BioGRID" id="14101">
    <property type="interactions" value="5"/>
</dbReference>
<dbReference type="FunCoup" id="Q9T041">
    <property type="interactions" value="2615"/>
</dbReference>
<dbReference type="IntAct" id="Q9T041">
    <property type="interactions" value="4"/>
</dbReference>
<dbReference type="STRING" id="3702.Q9T041"/>
<dbReference type="iPTMnet" id="Q9T041"/>
<dbReference type="PaxDb" id="3702-AT4G27060.1"/>
<dbReference type="ProteomicsDB" id="228290"/>
<dbReference type="EnsemblPlants" id="AT4G27060.1">
    <property type="protein sequence ID" value="AT4G27060.1"/>
    <property type="gene ID" value="AT4G27060"/>
</dbReference>
<dbReference type="GeneID" id="828814"/>
<dbReference type="Gramene" id="AT4G27060.1">
    <property type="protein sequence ID" value="AT4G27060.1"/>
    <property type="gene ID" value="AT4G27060"/>
</dbReference>
<dbReference type="KEGG" id="ath:AT4G27060"/>
<dbReference type="Araport" id="AT4G27060"/>
<dbReference type="TAIR" id="AT4G27060">
    <property type="gene designation" value="TOR1"/>
</dbReference>
<dbReference type="eggNOG" id="ENOG502QUFS">
    <property type="taxonomic scope" value="Eukaryota"/>
</dbReference>
<dbReference type="HOGENOM" id="CLU_019435_0_0_1"/>
<dbReference type="InParanoid" id="Q9T041"/>
<dbReference type="OMA" id="GKYNGRA"/>
<dbReference type="PhylomeDB" id="Q9T041"/>
<dbReference type="PRO" id="PR:Q9T041"/>
<dbReference type="Proteomes" id="UP000006548">
    <property type="component" value="Chromosome 4"/>
</dbReference>
<dbReference type="ExpressionAtlas" id="Q9T041">
    <property type="expression patterns" value="baseline and differential"/>
</dbReference>
<dbReference type="GO" id="GO:0010005">
    <property type="term" value="C:cortical microtubule, transverse to long axis"/>
    <property type="evidence" value="ECO:0000314"/>
    <property type="project" value="TAIR"/>
</dbReference>
<dbReference type="GO" id="GO:0008017">
    <property type="term" value="F:microtubule binding"/>
    <property type="evidence" value="ECO:0000314"/>
    <property type="project" value="TAIR"/>
</dbReference>
<dbReference type="GO" id="GO:0010031">
    <property type="term" value="P:circumnutation"/>
    <property type="evidence" value="ECO:0000315"/>
    <property type="project" value="TAIR"/>
</dbReference>
<dbReference type="GO" id="GO:0009826">
    <property type="term" value="P:unidimensional cell growth"/>
    <property type="evidence" value="ECO:0000315"/>
    <property type="project" value="TAIR"/>
</dbReference>
<dbReference type="FunFam" id="1.25.10.10:FF:000224">
    <property type="entry name" value="Microtubule-associated protein TORTIFOLIA1"/>
    <property type="match status" value="1"/>
</dbReference>
<dbReference type="FunFam" id="1.25.10.10:FF:000339">
    <property type="entry name" value="Microtubule-associated protein TORTIFOLIA1"/>
    <property type="match status" value="1"/>
</dbReference>
<dbReference type="Gene3D" id="1.25.10.10">
    <property type="entry name" value="Leucine-rich Repeat Variant"/>
    <property type="match status" value="2"/>
</dbReference>
<dbReference type="InterPro" id="IPR011989">
    <property type="entry name" value="ARM-like"/>
</dbReference>
<dbReference type="InterPro" id="IPR016024">
    <property type="entry name" value="ARM-type_fold"/>
</dbReference>
<dbReference type="InterPro" id="IPR033337">
    <property type="entry name" value="TORTIFOLIA1/SINE1-2"/>
</dbReference>
<dbReference type="PANTHER" id="PTHR31355">
    <property type="entry name" value="MICROTUBULE-ASSOCIATED PROTEIN TORTIFOLIA1"/>
    <property type="match status" value="1"/>
</dbReference>
<dbReference type="PANTHER" id="PTHR31355:SF7">
    <property type="entry name" value="MICROTUBULE-ASSOCIATED PROTEIN TORTIFOLIA1"/>
    <property type="match status" value="1"/>
</dbReference>
<dbReference type="Pfam" id="PF24713">
    <property type="entry name" value="TOR1L1_C"/>
    <property type="match status" value="1"/>
</dbReference>
<dbReference type="Pfam" id="PF24714">
    <property type="entry name" value="TOR1L1_N"/>
    <property type="match status" value="1"/>
</dbReference>
<dbReference type="SUPFAM" id="SSF48371">
    <property type="entry name" value="ARM repeat"/>
    <property type="match status" value="1"/>
</dbReference>
<gene>
    <name evidence="8" type="primary">TOR1</name>
    <name type="synonym">CN</name>
    <name evidence="9" type="synonym">SPR2</name>
    <name evidence="11" type="ordered locus">At4g27060</name>
    <name type="ORF">T24A18.10</name>
</gene>
<evidence type="ECO:0000255" key="1"/>
<evidence type="ECO:0000256" key="2">
    <source>
        <dbReference type="SAM" id="MobiDB-lite"/>
    </source>
</evidence>
<evidence type="ECO:0000269" key="3">
    <source>
    </source>
</evidence>
<evidence type="ECO:0000269" key="4">
    <source>
    </source>
</evidence>
<evidence type="ECO:0000269" key="5">
    <source>
    </source>
</evidence>
<evidence type="ECO:0000269" key="6">
    <source>
    </source>
</evidence>
<evidence type="ECO:0000269" key="7">
    <source>
    </source>
</evidence>
<evidence type="ECO:0000303" key="8">
    <source>
    </source>
</evidence>
<evidence type="ECO:0000303" key="9">
    <source>
    </source>
</evidence>
<evidence type="ECO:0000305" key="10"/>
<evidence type="ECO:0000312" key="11">
    <source>
        <dbReference type="Araport" id="AT4G27060"/>
    </source>
</evidence>
<evidence type="ECO:0007744" key="12">
    <source>
    </source>
</evidence>
<evidence type="ECO:0007829" key="13">
    <source>
        <dbReference type="PDB" id="8F8N"/>
    </source>
</evidence>
<reference key="1">
    <citation type="journal article" date="2004" name="Curr. Biol.">
        <title>Helical growth of the Arabidopsis mutant tortifolia1 reveals a plant-specific microtubule-associated protein.</title>
        <authorList>
            <person name="Buschmann H."/>
            <person name="Fabri C.O."/>
            <person name="Hauptmann M."/>
            <person name="Hutzler P."/>
            <person name="Laux T."/>
            <person name="Lloyd C.W."/>
            <person name="Schaeffner A.R."/>
        </authorList>
    </citation>
    <scope>NUCLEOTIDE SEQUENCE [MRNA]</scope>
    <scope>SUBCELLULAR LOCATION</scope>
    <scope>TISSUE SPECIFICITY</scope>
    <scope>GENE FAMILY</scope>
</reference>
<reference key="2">
    <citation type="journal article" date="2004" name="Plant Physiol.">
        <title>Plant-specific microtubule-associated protein SPIRAL2 is required for anisotropic growth in Arabidopsis.</title>
        <authorList>
            <person name="Shoji T."/>
            <person name="Narita N.N."/>
            <person name="Hayashi K."/>
            <person name="Asada J."/>
            <person name="Hamada T."/>
            <person name="Sonobe S."/>
            <person name="Nakajima K."/>
            <person name="Hashimoto T."/>
        </authorList>
    </citation>
    <scope>NUCLEOTIDE SEQUENCE [MRNA]</scope>
    <scope>SUBCELLULAR LOCATION</scope>
    <scope>TISSUE SPECIFICITY</scope>
    <scope>GENE FAMILY</scope>
</reference>
<reference key="3">
    <citation type="journal article" date="1999" name="Nature">
        <title>Sequence and analysis of chromosome 4 of the plant Arabidopsis thaliana.</title>
        <authorList>
            <person name="Mayer K.F.X."/>
            <person name="Schueller C."/>
            <person name="Wambutt R."/>
            <person name="Murphy G."/>
            <person name="Volckaert G."/>
            <person name="Pohl T."/>
            <person name="Duesterhoeft A."/>
            <person name="Stiekema W."/>
            <person name="Entian K.-D."/>
            <person name="Terryn N."/>
            <person name="Harris B."/>
            <person name="Ansorge W."/>
            <person name="Brandt P."/>
            <person name="Grivell L.A."/>
            <person name="Rieger M."/>
            <person name="Weichselgartner M."/>
            <person name="de Simone V."/>
            <person name="Obermaier B."/>
            <person name="Mache R."/>
            <person name="Mueller M."/>
            <person name="Kreis M."/>
            <person name="Delseny M."/>
            <person name="Puigdomenech P."/>
            <person name="Watson M."/>
            <person name="Schmidtheini T."/>
            <person name="Reichert B."/>
            <person name="Portetelle D."/>
            <person name="Perez-Alonso M."/>
            <person name="Boutry M."/>
            <person name="Bancroft I."/>
            <person name="Vos P."/>
            <person name="Hoheisel J."/>
            <person name="Zimmermann W."/>
            <person name="Wedler H."/>
            <person name="Ridley P."/>
            <person name="Langham S.-A."/>
            <person name="McCullagh B."/>
            <person name="Bilham L."/>
            <person name="Robben J."/>
            <person name="van der Schueren J."/>
            <person name="Grymonprez B."/>
            <person name="Chuang Y.-J."/>
            <person name="Vandenbussche F."/>
            <person name="Braeken M."/>
            <person name="Weltjens I."/>
            <person name="Voet M."/>
            <person name="Bastiaens I."/>
            <person name="Aert R."/>
            <person name="Defoor E."/>
            <person name="Weitzenegger T."/>
            <person name="Bothe G."/>
            <person name="Ramsperger U."/>
            <person name="Hilbert H."/>
            <person name="Braun M."/>
            <person name="Holzer E."/>
            <person name="Brandt A."/>
            <person name="Peters S."/>
            <person name="van Staveren M."/>
            <person name="Dirkse W."/>
            <person name="Mooijman P."/>
            <person name="Klein Lankhorst R."/>
            <person name="Rose M."/>
            <person name="Hauf J."/>
            <person name="Koetter P."/>
            <person name="Berneiser S."/>
            <person name="Hempel S."/>
            <person name="Feldpausch M."/>
            <person name="Lamberth S."/>
            <person name="Van den Daele H."/>
            <person name="De Keyser A."/>
            <person name="Buysshaert C."/>
            <person name="Gielen J."/>
            <person name="Villarroel R."/>
            <person name="De Clercq R."/>
            <person name="van Montagu M."/>
            <person name="Rogers J."/>
            <person name="Cronin A."/>
            <person name="Quail M.A."/>
            <person name="Bray-Allen S."/>
            <person name="Clark L."/>
            <person name="Doggett J."/>
            <person name="Hall S."/>
            <person name="Kay M."/>
            <person name="Lennard N."/>
            <person name="McLay K."/>
            <person name="Mayes R."/>
            <person name="Pettett A."/>
            <person name="Rajandream M.A."/>
            <person name="Lyne M."/>
            <person name="Benes V."/>
            <person name="Rechmann S."/>
            <person name="Borkova D."/>
            <person name="Bloecker H."/>
            <person name="Scharfe M."/>
            <person name="Grimm M."/>
            <person name="Loehnert T.-H."/>
            <person name="Dose S."/>
            <person name="de Haan M."/>
            <person name="Maarse A.C."/>
            <person name="Schaefer M."/>
            <person name="Mueller-Auer S."/>
            <person name="Gabel C."/>
            <person name="Fuchs M."/>
            <person name="Fartmann B."/>
            <person name="Granderath K."/>
            <person name="Dauner D."/>
            <person name="Herzl A."/>
            <person name="Neumann S."/>
            <person name="Argiriou A."/>
            <person name="Vitale D."/>
            <person name="Liguori R."/>
            <person name="Piravandi E."/>
            <person name="Massenet O."/>
            <person name="Quigley F."/>
            <person name="Clabauld G."/>
            <person name="Muendlein A."/>
            <person name="Felber R."/>
            <person name="Schnabl S."/>
            <person name="Hiller R."/>
            <person name="Schmidt W."/>
            <person name="Lecharny A."/>
            <person name="Aubourg S."/>
            <person name="Chefdor F."/>
            <person name="Cooke R."/>
            <person name="Berger C."/>
            <person name="Monfort A."/>
            <person name="Casacuberta E."/>
            <person name="Gibbons T."/>
            <person name="Weber N."/>
            <person name="Vandenbol M."/>
            <person name="Bargues M."/>
            <person name="Terol J."/>
            <person name="Torres A."/>
            <person name="Perez-Perez A."/>
            <person name="Purnelle B."/>
            <person name="Bent E."/>
            <person name="Johnson S."/>
            <person name="Tacon D."/>
            <person name="Jesse T."/>
            <person name="Heijnen L."/>
            <person name="Schwarz S."/>
            <person name="Scholler P."/>
            <person name="Heber S."/>
            <person name="Francs P."/>
            <person name="Bielke C."/>
            <person name="Frishman D."/>
            <person name="Haase D."/>
            <person name="Lemcke K."/>
            <person name="Mewes H.-W."/>
            <person name="Stocker S."/>
            <person name="Zaccaria P."/>
            <person name="Bevan M."/>
            <person name="Wilson R.K."/>
            <person name="de la Bastide M."/>
            <person name="Habermann K."/>
            <person name="Parnell L."/>
            <person name="Dedhia N."/>
            <person name="Gnoj L."/>
            <person name="Schutz K."/>
            <person name="Huang E."/>
            <person name="Spiegel L."/>
            <person name="Sekhon M."/>
            <person name="Murray J."/>
            <person name="Sheet P."/>
            <person name="Cordes M."/>
            <person name="Abu-Threideh J."/>
            <person name="Stoneking T."/>
            <person name="Kalicki J."/>
            <person name="Graves T."/>
            <person name="Harmon G."/>
            <person name="Edwards J."/>
            <person name="Latreille P."/>
            <person name="Courtney L."/>
            <person name="Cloud J."/>
            <person name="Abbott A."/>
            <person name="Scott K."/>
            <person name="Johnson D."/>
            <person name="Minx P."/>
            <person name="Bentley D."/>
            <person name="Fulton B."/>
            <person name="Miller N."/>
            <person name="Greco T."/>
            <person name="Kemp K."/>
            <person name="Kramer J."/>
            <person name="Fulton L."/>
            <person name="Mardis E."/>
            <person name="Dante M."/>
            <person name="Pepin K."/>
            <person name="Hillier L.W."/>
            <person name="Nelson J."/>
            <person name="Spieth J."/>
            <person name="Ryan E."/>
            <person name="Andrews S."/>
            <person name="Geisel C."/>
            <person name="Layman D."/>
            <person name="Du H."/>
            <person name="Ali J."/>
            <person name="Berghoff A."/>
            <person name="Jones K."/>
            <person name="Drone K."/>
            <person name="Cotton M."/>
            <person name="Joshu C."/>
            <person name="Antonoiu B."/>
            <person name="Zidanic M."/>
            <person name="Strong C."/>
            <person name="Sun H."/>
            <person name="Lamar B."/>
            <person name="Yordan C."/>
            <person name="Ma P."/>
            <person name="Zhong J."/>
            <person name="Preston R."/>
            <person name="Vil D."/>
            <person name="Shekher M."/>
            <person name="Matero A."/>
            <person name="Shah R."/>
            <person name="Swaby I.K."/>
            <person name="O'Shaughnessy A."/>
            <person name="Rodriguez M."/>
            <person name="Hoffman J."/>
            <person name="Till S."/>
            <person name="Granat S."/>
            <person name="Shohdy N."/>
            <person name="Hasegawa A."/>
            <person name="Hameed A."/>
            <person name="Lodhi M."/>
            <person name="Johnson A."/>
            <person name="Chen E."/>
            <person name="Marra M.A."/>
            <person name="Martienssen R."/>
            <person name="McCombie W.R."/>
        </authorList>
    </citation>
    <scope>NUCLEOTIDE SEQUENCE [LARGE SCALE GENOMIC DNA]</scope>
    <source>
        <strain>cv. Columbia</strain>
    </source>
</reference>
<reference key="4">
    <citation type="journal article" date="2017" name="Plant J.">
        <title>Araport11: a complete reannotation of the Arabidopsis thaliana reference genome.</title>
        <authorList>
            <person name="Cheng C.Y."/>
            <person name="Krishnakumar V."/>
            <person name="Chan A.P."/>
            <person name="Thibaud-Nissen F."/>
            <person name="Schobel S."/>
            <person name="Town C.D."/>
        </authorList>
    </citation>
    <scope>GENOME REANNOTATION</scope>
    <source>
        <strain>cv. Columbia</strain>
    </source>
</reference>
<reference key="5">
    <citation type="journal article" date="2003" name="Science">
        <title>Empirical analysis of transcriptional activity in the Arabidopsis genome.</title>
        <authorList>
            <person name="Yamada K."/>
            <person name="Lim J."/>
            <person name="Dale J.M."/>
            <person name="Chen H."/>
            <person name="Shinn P."/>
            <person name="Palm C.J."/>
            <person name="Southwick A.M."/>
            <person name="Wu H.C."/>
            <person name="Kim C.J."/>
            <person name="Nguyen M."/>
            <person name="Pham P.K."/>
            <person name="Cheuk R.F."/>
            <person name="Karlin-Newmann G."/>
            <person name="Liu S.X."/>
            <person name="Lam B."/>
            <person name="Sakano H."/>
            <person name="Wu T."/>
            <person name="Yu G."/>
            <person name="Miranda M."/>
            <person name="Quach H.L."/>
            <person name="Tripp M."/>
            <person name="Chang C.H."/>
            <person name="Lee J.M."/>
            <person name="Toriumi M.J."/>
            <person name="Chan M.M."/>
            <person name="Tang C.C."/>
            <person name="Onodera C.S."/>
            <person name="Deng J.M."/>
            <person name="Akiyama K."/>
            <person name="Ansari Y."/>
            <person name="Arakawa T."/>
            <person name="Banh J."/>
            <person name="Banno F."/>
            <person name="Bowser L."/>
            <person name="Brooks S.Y."/>
            <person name="Carninci P."/>
            <person name="Chao Q."/>
            <person name="Choy N."/>
            <person name="Enju A."/>
            <person name="Goldsmith A.D."/>
            <person name="Gurjal M."/>
            <person name="Hansen N.F."/>
            <person name="Hayashizaki Y."/>
            <person name="Johnson-Hopson C."/>
            <person name="Hsuan V.W."/>
            <person name="Iida K."/>
            <person name="Karnes M."/>
            <person name="Khan S."/>
            <person name="Koesema E."/>
            <person name="Ishida J."/>
            <person name="Jiang P.X."/>
            <person name="Jones T."/>
            <person name="Kawai J."/>
            <person name="Kamiya A."/>
            <person name="Meyers C."/>
            <person name="Nakajima M."/>
            <person name="Narusaka M."/>
            <person name="Seki M."/>
            <person name="Sakurai T."/>
            <person name="Satou M."/>
            <person name="Tamse R."/>
            <person name="Vaysberg M."/>
            <person name="Wallender E.K."/>
            <person name="Wong C."/>
            <person name="Yamamura Y."/>
            <person name="Yuan S."/>
            <person name="Shinozaki K."/>
            <person name="Davis R.W."/>
            <person name="Theologis A."/>
            <person name="Ecker J.R."/>
        </authorList>
    </citation>
    <scope>NUCLEOTIDE SEQUENCE [LARGE SCALE MRNA] OF 80-864</scope>
    <source>
        <strain>cv. Columbia</strain>
    </source>
</reference>
<reference key="6">
    <citation type="journal article" date="2008" name="J. Cell Sci.">
        <title>Arabidopsis SPIRAL2 promotes uninterrupted microtubule growth by suppressing the pause state of microtubule dynamics.</title>
        <authorList>
            <person name="Yao M."/>
            <person name="Wakamatsu Y."/>
            <person name="Itoh T.J."/>
            <person name="Shoji T."/>
            <person name="Hashimoto T."/>
        </authorList>
    </citation>
    <scope>FUNCTION</scope>
    <scope>DISRUPTION PHENOTYPE</scope>
    <scope>TISSUE SPECIFICITY</scope>
    <scope>SUBCELLULAR LOCATION</scope>
</reference>
<reference key="7">
    <citation type="journal article" date="2009" name="J. Proteomics">
        <title>Phosphoproteomic analysis of nuclei-enriched fractions from Arabidopsis thaliana.</title>
        <authorList>
            <person name="Jones A.M.E."/>
            <person name="MacLean D."/>
            <person name="Studholme D.J."/>
            <person name="Serna-Sanz A."/>
            <person name="Andreasson E."/>
            <person name="Rathjen J.P."/>
            <person name="Peck S.C."/>
        </authorList>
    </citation>
    <scope>PHOSPHORYLATION [LARGE SCALE ANALYSIS] AT SER-414</scope>
    <scope>IDENTIFICATION BY MASS SPECTROMETRY [LARGE SCALE ANALYSIS]</scope>
    <source>
        <strain>cv. Columbia</strain>
    </source>
</reference>
<reference key="8">
    <citation type="journal article" date="2009" name="Plant Physiol.">
        <title>Large-scale Arabidopsis phosphoproteome profiling reveals novel chloroplast kinase substrates and phosphorylation networks.</title>
        <authorList>
            <person name="Reiland S."/>
            <person name="Messerli G."/>
            <person name="Baerenfaller K."/>
            <person name="Gerrits B."/>
            <person name="Endler A."/>
            <person name="Grossmann J."/>
            <person name="Gruissem W."/>
            <person name="Baginsky S."/>
        </authorList>
    </citation>
    <scope>IDENTIFICATION BY MASS SPECTROMETRY [LARGE SCALE ANALYSIS]</scope>
</reference>
<reference key="9">
    <citation type="journal article" date="2012" name="Plant J.">
        <title>The wavy growth 3 E3 ligase family controls the gravitropic response in Arabidopsis roots.</title>
        <authorList>
            <person name="Sakai T."/>
            <person name="Mochizuki S."/>
            <person name="Haga K."/>
            <person name="Uehara Y."/>
            <person name="Suzuki A."/>
            <person name="Harada A."/>
            <person name="Wada T."/>
            <person name="Ishiguro S."/>
            <person name="Okada K."/>
        </authorList>
    </citation>
    <scope>INTERACTION WITH WAV3</scope>
    <source>
        <strain>cv. Landsberg erecta</strain>
    </source>
</reference>
<reference key="10">
    <citation type="journal article" date="2013" name="Curr. Biol.">
        <title>SPIRAL2 determines plant microtubule organization by modulating microtubule severing.</title>
        <authorList>
            <person name="Wightman R."/>
            <person name="Chomicki G."/>
            <person name="Kumar M."/>
            <person name="Carr P."/>
            <person name="Turner S.R."/>
        </authorList>
    </citation>
    <scope>FUNCTION</scope>
</reference>
<name>TOR1_ARATH</name>
<protein>
    <recommendedName>
        <fullName evidence="8">Microtubule-associated protein TORTIFOLIA1</fullName>
    </recommendedName>
    <alternativeName>
        <fullName evidence="9">Microtubule-associated protein SPIRAL2</fullName>
    </alternativeName>
    <alternativeName>
        <fullName>Protein CONVOLUTA</fullName>
    </alternativeName>
</protein>
<organism>
    <name type="scientific">Arabidopsis thaliana</name>
    <name type="common">Mouse-ear cress</name>
    <dbReference type="NCBI Taxonomy" id="3702"/>
    <lineage>
        <taxon>Eukaryota</taxon>
        <taxon>Viridiplantae</taxon>
        <taxon>Streptophyta</taxon>
        <taxon>Embryophyta</taxon>
        <taxon>Tracheophyta</taxon>
        <taxon>Spermatophyta</taxon>
        <taxon>Magnoliopsida</taxon>
        <taxon>eudicotyledons</taxon>
        <taxon>Gunneridae</taxon>
        <taxon>Pentapetalae</taxon>
        <taxon>rosids</taxon>
        <taxon>malvids</taxon>
        <taxon>Brassicales</taxon>
        <taxon>Brassicaceae</taxon>
        <taxon>Camelineae</taxon>
        <taxon>Arabidopsis</taxon>
    </lineage>
</organism>
<sequence>MSTPTTSGSAAKPTRPARSSSLATRSCSNSGSLTSFQAMVELKQKILTSISKLADRDTYQIAVEDLEKTIQSLTPETLPMFLNCLYDSCSDPKPAVKKECLHLLSYVCSLHCDSTAAHLTKIIAQIVKRLKDSDSGVRDACRDTIGALSGIYLKGKEEGTNTGSASLAVGLFVKPLFEAMGEQNKVVQSGASMCMARMVESAASPPVTSFQKLCPRICKLLSNSSFLAKASLLPVVSSLSQVGAIAPQSLESLLESIHDCLGSTDWVTRKAAAETLTALASHSSGLIKEKTDSTITVLETCRFDKIKPVRESVTEALQLWKKISGKYVDGASDDSKLSASEQLGSEKNGEKRSNLADLMKKEASDGSTLSPDSASKGKGCFPEKAVGLLKKKAPVLSDKDFNPEFFQRLERRQSVEVVVPRRCKNNDEEESGLDDLNAMGSSNRLKNTQADDKQVKGRFDGNGSQARTSGDDKAGVVNGKETPGHHAPVSNTDNQSEGSFTSNRGNWSAIQRQLLQLERQQTNLMNMLQEFIGGSHDSMVTLEGRVRGLERIVEDMARDLSISSGRRANLTAGFGKYNSFANYPTGKYNGRAPGERGSQTDGAMRGRMWNSDMADDWFIPPHAASRNGQAGPRRSPRSEQYENEHMGNGRRGWDNKASGTIRFGEGPSARSVWQASKDEATLEAIRVAGEDGAVPRPTRVAVAPEAEAMGDDDNEGQERDPIWVSWSNAMHSLRVGDIDAAYAEVLCAGDQHLVIKLMDKTGPSLDQMSNEIANEALNFISQFLLDHSLYDICLSWSQQLLELVLQDGADTFGVPMELKTEILYNLQDACSTMDPPEDWEGPAPEQLVVQLASVWEIDLQQFDK</sequence>
<feature type="chain" id="PRO_0000076255" description="Microtubule-associated protein TORTIFOLIA1">
    <location>
        <begin position="1"/>
        <end position="864"/>
    </location>
</feature>
<feature type="repeat" description="HEAT 1">
    <location>
        <begin position="76"/>
        <end position="113"/>
    </location>
</feature>
<feature type="repeat" description="HEAT 2">
    <location>
        <begin position="117"/>
        <end position="154"/>
    </location>
</feature>
<feature type="repeat" description="HEAT 3">
    <location>
        <begin position="167"/>
        <end position="204"/>
    </location>
</feature>
<feature type="repeat" description="HEAT 4">
    <location>
        <begin position="208"/>
        <end position="245"/>
    </location>
</feature>
<feature type="repeat" description="HEAT 5">
    <location>
        <begin position="248"/>
        <end position="285"/>
    </location>
</feature>
<feature type="region of interest" description="Disordered" evidence="2">
    <location>
        <begin position="1"/>
        <end position="26"/>
    </location>
</feature>
<feature type="region of interest" description="Disordered" evidence="2">
    <location>
        <begin position="329"/>
        <end position="353"/>
    </location>
</feature>
<feature type="region of interest" description="Disordered" evidence="2">
    <location>
        <begin position="426"/>
        <end position="504"/>
    </location>
</feature>
<feature type="region of interest" description="Disordered" evidence="2">
    <location>
        <begin position="615"/>
        <end position="670"/>
    </location>
</feature>
<feature type="coiled-coil region" evidence="1">
    <location>
        <begin position="508"/>
        <end position="561"/>
    </location>
</feature>
<feature type="compositionally biased region" description="Polar residues" evidence="2">
    <location>
        <begin position="17"/>
        <end position="26"/>
    </location>
</feature>
<feature type="compositionally biased region" description="Polar residues" evidence="2">
    <location>
        <begin position="439"/>
        <end position="448"/>
    </location>
</feature>
<feature type="compositionally biased region" description="Basic and acidic residues" evidence="2">
    <location>
        <begin position="449"/>
        <end position="459"/>
    </location>
</feature>
<feature type="compositionally biased region" description="Polar residues" evidence="2">
    <location>
        <begin position="489"/>
        <end position="504"/>
    </location>
</feature>
<feature type="compositionally biased region" description="Basic and acidic residues" evidence="2">
    <location>
        <begin position="636"/>
        <end position="654"/>
    </location>
</feature>
<feature type="modified residue" description="Phosphoserine" evidence="12">
    <location>
        <position position="414"/>
    </location>
</feature>
<feature type="helix" evidence="13">
    <location>
        <begin position="721"/>
        <end position="734"/>
    </location>
</feature>
<feature type="helix" evidence="13">
    <location>
        <begin position="738"/>
        <end position="747"/>
    </location>
</feature>
<feature type="helix" evidence="13">
    <location>
        <begin position="751"/>
        <end position="761"/>
    </location>
</feature>
<feature type="helix" evidence="13">
    <location>
        <begin position="765"/>
        <end position="767"/>
    </location>
</feature>
<feature type="helix" evidence="13">
    <location>
        <begin position="770"/>
        <end position="783"/>
    </location>
</feature>
<feature type="helix" evidence="13">
    <location>
        <begin position="787"/>
        <end position="789"/>
    </location>
</feature>
<feature type="helix" evidence="13">
    <location>
        <begin position="790"/>
        <end position="807"/>
    </location>
</feature>
<feature type="turn" evidence="13">
    <location>
        <begin position="809"/>
        <end position="812"/>
    </location>
</feature>
<feature type="helix" evidence="13">
    <location>
        <begin position="816"/>
        <end position="832"/>
    </location>
</feature>
<feature type="helix" evidence="13">
    <location>
        <begin position="844"/>
        <end position="854"/>
    </location>
</feature>
<feature type="helix" evidence="13">
    <location>
        <begin position="859"/>
        <end position="861"/>
    </location>
</feature>
<keyword id="KW-0002">3D-structure</keyword>
<keyword id="KW-0175">Coiled coil</keyword>
<keyword id="KW-0963">Cytoplasm</keyword>
<keyword id="KW-0206">Cytoskeleton</keyword>
<keyword id="KW-0493">Microtubule</keyword>
<keyword id="KW-0597">Phosphoprotein</keyword>
<keyword id="KW-1185">Reference proteome</keyword>
<keyword id="KW-0677">Repeat</keyword>